<protein>
    <recommendedName>
        <fullName evidence="1">Putative regulatory protein LIC_11384</fullName>
    </recommendedName>
</protein>
<evidence type="ECO:0000255" key="1">
    <source>
        <dbReference type="HAMAP-Rule" id="MF_01503"/>
    </source>
</evidence>
<feature type="chain" id="PRO_0000050233" description="Putative regulatory protein LIC_11384">
    <location>
        <begin position="1"/>
        <end position="93"/>
    </location>
</feature>
<name>Y1384_LEPIC</name>
<organism>
    <name type="scientific">Leptospira interrogans serogroup Icterohaemorrhagiae serovar copenhageni (strain Fiocruz L1-130)</name>
    <dbReference type="NCBI Taxonomy" id="267671"/>
    <lineage>
        <taxon>Bacteria</taxon>
        <taxon>Pseudomonadati</taxon>
        <taxon>Spirochaetota</taxon>
        <taxon>Spirochaetia</taxon>
        <taxon>Leptospirales</taxon>
        <taxon>Leptospiraceae</taxon>
        <taxon>Leptospira</taxon>
    </lineage>
</organism>
<dbReference type="EMBL" id="AE016823">
    <property type="protein sequence ID" value="AAS69985.1"/>
    <property type="molecule type" value="Genomic_DNA"/>
</dbReference>
<dbReference type="RefSeq" id="WP_000077420.1">
    <property type="nucleotide sequence ID" value="NC_005823.1"/>
</dbReference>
<dbReference type="SMR" id="Q72SJ7"/>
<dbReference type="KEGG" id="lic:LIC_11384"/>
<dbReference type="HOGENOM" id="CLU_165326_0_0_12"/>
<dbReference type="Proteomes" id="UP000007037">
    <property type="component" value="Chromosome I"/>
</dbReference>
<dbReference type="HAMAP" id="MF_01503">
    <property type="entry name" value="RemA"/>
    <property type="match status" value="1"/>
</dbReference>
<dbReference type="InterPro" id="IPR007169">
    <property type="entry name" value="RemA-like"/>
</dbReference>
<dbReference type="NCBIfam" id="NF003315">
    <property type="entry name" value="PRK04323.1"/>
    <property type="match status" value="1"/>
</dbReference>
<dbReference type="PANTHER" id="PTHR38449:SF1">
    <property type="entry name" value="REGULATORY PROTEIN SSL2874-RELATED"/>
    <property type="match status" value="1"/>
</dbReference>
<dbReference type="PANTHER" id="PTHR38449">
    <property type="entry name" value="REGULATORY PROTEIN TM_1690-RELATED"/>
    <property type="match status" value="1"/>
</dbReference>
<dbReference type="Pfam" id="PF04025">
    <property type="entry name" value="RemA-like"/>
    <property type="match status" value="1"/>
</dbReference>
<gene>
    <name type="ordered locus">LIC_11384</name>
</gene>
<sequence>MSQFSVLNVGFGNIVLVSKIVSIIHSDSASAKRIRNEAKSNNSLIDATQGKKTRSIIVTDSNHLILSNLRVESLTKRIESRDNSIASEEEDLD</sequence>
<proteinExistence type="inferred from homology"/>
<accession>Q72SJ7</accession>
<reference key="1">
    <citation type="journal article" date="2004" name="J. Bacteriol.">
        <title>Comparative genomics of two Leptospira interrogans serovars reveals novel insights into physiology and pathogenesis.</title>
        <authorList>
            <person name="Nascimento A.L.T.O."/>
            <person name="Ko A.I."/>
            <person name="Martins E.A.L."/>
            <person name="Monteiro-Vitorello C.B."/>
            <person name="Ho P.L."/>
            <person name="Haake D.A."/>
            <person name="Verjovski-Almeida S."/>
            <person name="Hartskeerl R.A."/>
            <person name="Marques M.V."/>
            <person name="Oliveira M.C."/>
            <person name="Menck C.F.M."/>
            <person name="Leite L.C.C."/>
            <person name="Carrer H."/>
            <person name="Coutinho L.L."/>
            <person name="Degrave W.M."/>
            <person name="Dellagostin O.A."/>
            <person name="El-Dorry H."/>
            <person name="Ferro E.S."/>
            <person name="Ferro M.I.T."/>
            <person name="Furlan L.R."/>
            <person name="Gamberini M."/>
            <person name="Giglioti E.A."/>
            <person name="Goes-Neto A."/>
            <person name="Goldman G.H."/>
            <person name="Goldman M.H.S."/>
            <person name="Harakava R."/>
            <person name="Jeronimo S.M.B."/>
            <person name="Junqueira-de-Azevedo I.L.M."/>
            <person name="Kimura E.T."/>
            <person name="Kuramae E.E."/>
            <person name="Lemos E.G.M."/>
            <person name="Lemos M.V.F."/>
            <person name="Marino C.L."/>
            <person name="Nunes L.R."/>
            <person name="de Oliveira R.C."/>
            <person name="Pereira G.G."/>
            <person name="Reis M.S."/>
            <person name="Schriefer A."/>
            <person name="Siqueira W.J."/>
            <person name="Sommer P."/>
            <person name="Tsai S.M."/>
            <person name="Simpson A.J.G."/>
            <person name="Ferro J.A."/>
            <person name="Camargo L.E.A."/>
            <person name="Kitajima J.P."/>
            <person name="Setubal J.C."/>
            <person name="Van Sluys M.A."/>
        </authorList>
    </citation>
    <scope>NUCLEOTIDE SEQUENCE [LARGE SCALE GENOMIC DNA]</scope>
    <source>
        <strain>Fiocruz L1-130</strain>
    </source>
</reference>
<comment type="similarity">
    <text evidence="1">Belongs to the RemA family.</text>
</comment>